<reference key="1">
    <citation type="journal article" date="2002" name="Mol. Phylogenet. Evol.">
        <title>Characterization and phylogenetic utility of the mammalian protamine P1 gene.</title>
        <authorList>
            <person name="Van Den Bussche R.A."/>
            <person name="Hoofer S.R."/>
            <person name="Hansen E.W."/>
        </authorList>
    </citation>
    <scope>NUCLEOTIDE SEQUENCE [GENOMIC DNA]</scope>
</reference>
<proteinExistence type="evidence at transcript level"/>
<evidence type="ECO:0000250" key="1"/>
<evidence type="ECO:0000256" key="2">
    <source>
        <dbReference type="SAM" id="MobiDB-lite"/>
    </source>
</evidence>
<evidence type="ECO:0000305" key="3"/>
<sequence>MARYSCCRSHSRSRSRRRRQRCRRRRRRSCGRRRRACYRRYTVRYRRRRRRR</sequence>
<comment type="function">
    <text evidence="1">Protamines substitute for histones in the chromatin of sperm during the haploid phase of spermatogenesis. They compact sperm DNA into a highly condensed, stable and inactive complex (By similarity).</text>
</comment>
<comment type="subcellular location">
    <subcellularLocation>
        <location evidence="1">Nucleus</location>
    </subcellularLocation>
    <subcellularLocation>
        <location evidence="1">Chromosome</location>
    </subcellularLocation>
</comment>
<comment type="tissue specificity">
    <text>Testis.</text>
</comment>
<comment type="similarity">
    <text evidence="3">Belongs to the protamine P1 family.</text>
</comment>
<keyword id="KW-0158">Chromosome</keyword>
<keyword id="KW-0217">Developmental protein</keyword>
<keyword id="KW-0221">Differentiation</keyword>
<keyword id="KW-0226">DNA condensation</keyword>
<keyword id="KW-0238">DNA-binding</keyword>
<keyword id="KW-0544">Nucleosome core</keyword>
<keyword id="KW-0539">Nucleus</keyword>
<keyword id="KW-1185">Reference proteome</keyword>
<keyword id="KW-0744">Spermatogenesis</keyword>
<name>HSP1_RHIFE</name>
<protein>
    <recommendedName>
        <fullName>Sperm protamine P1</fullName>
    </recommendedName>
</protein>
<gene>
    <name type="primary">PRM1</name>
</gene>
<accession>Q8WNZ7</accession>
<organism>
    <name type="scientific">Rhinolophus ferrumequinum</name>
    <name type="common">Greater horseshoe bat</name>
    <dbReference type="NCBI Taxonomy" id="59479"/>
    <lineage>
        <taxon>Eukaryota</taxon>
        <taxon>Metazoa</taxon>
        <taxon>Chordata</taxon>
        <taxon>Craniata</taxon>
        <taxon>Vertebrata</taxon>
        <taxon>Euteleostomi</taxon>
        <taxon>Mammalia</taxon>
        <taxon>Eutheria</taxon>
        <taxon>Laurasiatheria</taxon>
        <taxon>Chiroptera</taxon>
        <taxon>Yinpterochiroptera</taxon>
        <taxon>Rhinolophoidea</taxon>
        <taxon>Rhinolophidae</taxon>
        <taxon>Rhinolophinae</taxon>
        <taxon>Rhinolophus</taxon>
    </lineage>
</organism>
<dbReference type="EMBL" id="AF435930">
    <property type="protein sequence ID" value="AAL35564.1"/>
    <property type="molecule type" value="Genomic_DNA"/>
</dbReference>
<dbReference type="Ensembl" id="ENSRFET00010023189.1">
    <property type="protein sequence ID" value="ENSRFEP00010021308.1"/>
    <property type="gene ID" value="ENSRFEG00010014300.1"/>
</dbReference>
<dbReference type="InParanoid" id="Q8WNZ7"/>
<dbReference type="OMA" id="MARYICC"/>
<dbReference type="Proteomes" id="UP000472240">
    <property type="component" value="Unplaced"/>
</dbReference>
<dbReference type="GO" id="GO:0000786">
    <property type="term" value="C:nucleosome"/>
    <property type="evidence" value="ECO:0007669"/>
    <property type="project" value="UniProtKB-KW"/>
</dbReference>
<dbReference type="GO" id="GO:0005634">
    <property type="term" value="C:nucleus"/>
    <property type="evidence" value="ECO:0007669"/>
    <property type="project" value="UniProtKB-SubCell"/>
</dbReference>
<dbReference type="GO" id="GO:0003677">
    <property type="term" value="F:DNA binding"/>
    <property type="evidence" value="ECO:0007669"/>
    <property type="project" value="UniProtKB-KW"/>
</dbReference>
<dbReference type="GO" id="GO:0030261">
    <property type="term" value="P:chromosome condensation"/>
    <property type="evidence" value="ECO:0007669"/>
    <property type="project" value="UniProtKB-KW"/>
</dbReference>
<dbReference type="GO" id="GO:0035092">
    <property type="term" value="P:sperm DNA condensation"/>
    <property type="evidence" value="ECO:0007669"/>
    <property type="project" value="InterPro"/>
</dbReference>
<dbReference type="InterPro" id="IPR000221">
    <property type="entry name" value="Protamine_P1"/>
</dbReference>
<dbReference type="Pfam" id="PF00260">
    <property type="entry name" value="Protamine_P1"/>
    <property type="match status" value="1"/>
</dbReference>
<feature type="chain" id="PRO_0000191550" description="Sperm protamine P1">
    <location>
        <begin position="1"/>
        <end position="52"/>
    </location>
</feature>
<feature type="region of interest" description="Disordered" evidence="2">
    <location>
        <begin position="1"/>
        <end position="27"/>
    </location>
</feature>
<feature type="compositionally biased region" description="Basic residues" evidence="2">
    <location>
        <begin position="9"/>
        <end position="27"/>
    </location>
</feature>